<accession>Q9HYB7</accession>
<protein>
    <recommendedName>
        <fullName evidence="1">Ion-translocating oxidoreductase complex subunit D</fullName>
        <ecNumber evidence="1">7.-.-.-</ecNumber>
    </recommendedName>
    <alternativeName>
        <fullName evidence="1">Rnf electron transport complex subunit D</fullName>
    </alternativeName>
</protein>
<reference key="1">
    <citation type="journal article" date="2000" name="Nature">
        <title>Complete genome sequence of Pseudomonas aeruginosa PAO1, an opportunistic pathogen.</title>
        <authorList>
            <person name="Stover C.K."/>
            <person name="Pham X.-Q.T."/>
            <person name="Erwin A.L."/>
            <person name="Mizoguchi S.D."/>
            <person name="Warrener P."/>
            <person name="Hickey M.J."/>
            <person name="Brinkman F.S.L."/>
            <person name="Hufnagle W.O."/>
            <person name="Kowalik D.J."/>
            <person name="Lagrou M."/>
            <person name="Garber R.L."/>
            <person name="Goltry L."/>
            <person name="Tolentino E."/>
            <person name="Westbrock-Wadman S."/>
            <person name="Yuan Y."/>
            <person name="Brody L.L."/>
            <person name="Coulter S.N."/>
            <person name="Folger K.R."/>
            <person name="Kas A."/>
            <person name="Larbig K."/>
            <person name="Lim R.M."/>
            <person name="Smith K.A."/>
            <person name="Spencer D.H."/>
            <person name="Wong G.K.-S."/>
            <person name="Wu Z."/>
            <person name="Paulsen I.T."/>
            <person name="Reizer J."/>
            <person name="Saier M.H. Jr."/>
            <person name="Hancock R.E.W."/>
            <person name="Lory S."/>
            <person name="Olson M.V."/>
        </authorList>
    </citation>
    <scope>NUCLEOTIDE SEQUENCE [LARGE SCALE GENOMIC DNA]</scope>
    <source>
        <strain>ATCC 15692 / DSM 22644 / CIP 104116 / JCM 14847 / LMG 12228 / 1C / PRS 101 / PAO1</strain>
    </source>
</reference>
<name>RNFD_PSEAE</name>
<organism>
    <name type="scientific">Pseudomonas aeruginosa (strain ATCC 15692 / DSM 22644 / CIP 104116 / JCM 14847 / LMG 12228 / 1C / PRS 101 / PAO1)</name>
    <dbReference type="NCBI Taxonomy" id="208964"/>
    <lineage>
        <taxon>Bacteria</taxon>
        <taxon>Pseudomonadati</taxon>
        <taxon>Pseudomonadota</taxon>
        <taxon>Gammaproteobacteria</taxon>
        <taxon>Pseudomonadales</taxon>
        <taxon>Pseudomonadaceae</taxon>
        <taxon>Pseudomonas</taxon>
    </lineage>
</organism>
<evidence type="ECO:0000255" key="1">
    <source>
        <dbReference type="HAMAP-Rule" id="MF_00462"/>
    </source>
</evidence>
<dbReference type="EC" id="7.-.-.-" evidence="1"/>
<dbReference type="EMBL" id="AE004091">
    <property type="protein sequence ID" value="AAG06880.1"/>
    <property type="molecule type" value="Genomic_DNA"/>
</dbReference>
<dbReference type="PIR" id="E83208">
    <property type="entry name" value="E83208"/>
</dbReference>
<dbReference type="RefSeq" id="NP_252182.1">
    <property type="nucleotide sequence ID" value="NC_002516.2"/>
</dbReference>
<dbReference type="RefSeq" id="WP_003092045.1">
    <property type="nucleotide sequence ID" value="NZ_QZGE01000001.1"/>
</dbReference>
<dbReference type="SMR" id="Q9HYB7"/>
<dbReference type="FunCoup" id="Q9HYB7">
    <property type="interactions" value="66"/>
</dbReference>
<dbReference type="STRING" id="208964.PA3492"/>
<dbReference type="PaxDb" id="208964-PA3492"/>
<dbReference type="GeneID" id="879870"/>
<dbReference type="KEGG" id="pae:PA3492"/>
<dbReference type="PATRIC" id="fig|208964.12.peg.3656"/>
<dbReference type="PseudoCAP" id="PA3492"/>
<dbReference type="HOGENOM" id="CLU_042020_0_0_6"/>
<dbReference type="InParanoid" id="Q9HYB7"/>
<dbReference type="OrthoDB" id="9776359at2"/>
<dbReference type="PhylomeDB" id="Q9HYB7"/>
<dbReference type="BioCyc" id="PAER208964:G1FZ6-3560-MONOMER"/>
<dbReference type="Proteomes" id="UP000002438">
    <property type="component" value="Chromosome"/>
</dbReference>
<dbReference type="GO" id="GO:0005886">
    <property type="term" value="C:plasma membrane"/>
    <property type="evidence" value="ECO:0000318"/>
    <property type="project" value="GO_Central"/>
</dbReference>
<dbReference type="GO" id="GO:0022900">
    <property type="term" value="P:electron transport chain"/>
    <property type="evidence" value="ECO:0007669"/>
    <property type="project" value="UniProtKB-UniRule"/>
</dbReference>
<dbReference type="GO" id="GO:0055085">
    <property type="term" value="P:transmembrane transport"/>
    <property type="evidence" value="ECO:0007669"/>
    <property type="project" value="InterPro"/>
</dbReference>
<dbReference type="HAMAP" id="MF_00462">
    <property type="entry name" value="RsxD_RnfD"/>
    <property type="match status" value="1"/>
</dbReference>
<dbReference type="InterPro" id="IPR004338">
    <property type="entry name" value="NqrB/RnfD"/>
</dbReference>
<dbReference type="InterPro" id="IPR011303">
    <property type="entry name" value="RnfD_bac"/>
</dbReference>
<dbReference type="NCBIfam" id="TIGR01946">
    <property type="entry name" value="rnfD"/>
    <property type="match status" value="1"/>
</dbReference>
<dbReference type="PANTHER" id="PTHR30578">
    <property type="entry name" value="ELECTRON TRANSPORT COMPLEX PROTEIN RNFD"/>
    <property type="match status" value="1"/>
</dbReference>
<dbReference type="PANTHER" id="PTHR30578:SF0">
    <property type="entry name" value="ION-TRANSLOCATING OXIDOREDUCTASE COMPLEX SUBUNIT D"/>
    <property type="match status" value="1"/>
</dbReference>
<dbReference type="Pfam" id="PF03116">
    <property type="entry name" value="NQR2_RnfD_RnfE"/>
    <property type="match status" value="1"/>
</dbReference>
<keyword id="KW-0997">Cell inner membrane</keyword>
<keyword id="KW-1003">Cell membrane</keyword>
<keyword id="KW-0249">Electron transport</keyword>
<keyword id="KW-0285">Flavoprotein</keyword>
<keyword id="KW-0288">FMN</keyword>
<keyword id="KW-0472">Membrane</keyword>
<keyword id="KW-0597">Phosphoprotein</keyword>
<keyword id="KW-1185">Reference proteome</keyword>
<keyword id="KW-1278">Translocase</keyword>
<keyword id="KW-0812">Transmembrane</keyword>
<keyword id="KW-1133">Transmembrane helix</keyword>
<keyword id="KW-0813">Transport</keyword>
<gene>
    <name evidence="1" type="primary">rnfD</name>
    <name type="ordered locus">PA3492</name>
</gene>
<sequence length="344" mass="36897">MALPRPTSPHARGSNRTPAIMRLVLGACVPGLLTLTWLYGPGTLLNLAWASLVALACEAAMLALRKRPPGVFLKDGSALVTALLLAVALPPYAPWWLTLVATFFALVFGKHLYGGLGQNPFNPAMLGYVVALVSFPLEMTRWPSPDSALGLPDSLREFLGLATRPDAWAHATALDVLKTDRSLTVDELFAGNPAFGHLGSAGSEWVNLAFLLGGLFLLWRRLFTWHAPLGMLAGLFAMSLLFWNGSGSDSHGSPLFHLFSGATMLGAFFIVTDPVSGATSNRGRLVFGLGVGVLTYVIRAWGGYPDGVAFAVLLMNLAAPTIDYYTRPRTYGHRKAERGFKAGD</sequence>
<proteinExistence type="inferred from homology"/>
<feature type="chain" id="PRO_0000074458" description="Ion-translocating oxidoreductase complex subunit D">
    <location>
        <begin position="1"/>
        <end position="344"/>
    </location>
</feature>
<feature type="transmembrane region" description="Helical" evidence="1">
    <location>
        <begin position="23"/>
        <end position="43"/>
    </location>
</feature>
<feature type="transmembrane region" description="Helical" evidence="1">
    <location>
        <begin position="44"/>
        <end position="64"/>
    </location>
</feature>
<feature type="transmembrane region" description="Helical" evidence="1">
    <location>
        <begin position="77"/>
        <end position="99"/>
    </location>
</feature>
<feature type="transmembrane region" description="Helical" evidence="1">
    <location>
        <begin position="120"/>
        <end position="140"/>
    </location>
</feature>
<feature type="transmembrane region" description="Helical" evidence="1">
    <location>
        <begin position="198"/>
        <end position="218"/>
    </location>
</feature>
<feature type="transmembrane region" description="Helical" evidence="1">
    <location>
        <begin position="222"/>
        <end position="242"/>
    </location>
</feature>
<feature type="transmembrane region" description="Helical" evidence="1">
    <location>
        <begin position="252"/>
        <end position="272"/>
    </location>
</feature>
<feature type="transmembrane region" description="Helical" evidence="1">
    <location>
        <begin position="285"/>
        <end position="305"/>
    </location>
</feature>
<feature type="transmembrane region" description="Helical" evidence="1">
    <location>
        <begin position="306"/>
        <end position="326"/>
    </location>
</feature>
<feature type="modified residue" description="FMN phosphoryl threonine" evidence="1">
    <location>
        <position position="172"/>
    </location>
</feature>
<comment type="function">
    <text evidence="1">Part of a membrane-bound complex that couples electron transfer with translocation of ions across the membrane.</text>
</comment>
<comment type="cofactor">
    <cofactor evidence="1">
        <name>FMN</name>
        <dbReference type="ChEBI" id="CHEBI:58210"/>
    </cofactor>
</comment>
<comment type="subunit">
    <text evidence="1">The complex is composed of six subunits: RnfA, RnfB, RnfC, RnfD, RnfE and RnfG.</text>
</comment>
<comment type="subcellular location">
    <subcellularLocation>
        <location evidence="1">Cell inner membrane</location>
        <topology evidence="1">Multi-pass membrane protein</topology>
    </subcellularLocation>
</comment>
<comment type="similarity">
    <text evidence="1">Belongs to the NqrB/RnfD family.</text>
</comment>